<comment type="function">
    <text evidence="1">Specifically dimethylates two adjacent adenosines (A1518 and A1519) in the loop of a conserved hairpin near the 3'-end of 16S rRNA in the 30S particle. May play a critical role in biogenesis of 30S subunits.</text>
</comment>
<comment type="catalytic activity">
    <reaction evidence="1">
        <text>adenosine(1518)/adenosine(1519) in 16S rRNA + 4 S-adenosyl-L-methionine = N(6)-dimethyladenosine(1518)/N(6)-dimethyladenosine(1519) in 16S rRNA + 4 S-adenosyl-L-homocysteine + 4 H(+)</text>
        <dbReference type="Rhea" id="RHEA:19609"/>
        <dbReference type="Rhea" id="RHEA-COMP:10232"/>
        <dbReference type="Rhea" id="RHEA-COMP:10233"/>
        <dbReference type="ChEBI" id="CHEBI:15378"/>
        <dbReference type="ChEBI" id="CHEBI:57856"/>
        <dbReference type="ChEBI" id="CHEBI:59789"/>
        <dbReference type="ChEBI" id="CHEBI:74411"/>
        <dbReference type="ChEBI" id="CHEBI:74493"/>
        <dbReference type="EC" id="2.1.1.182"/>
    </reaction>
</comment>
<comment type="subcellular location">
    <subcellularLocation>
        <location evidence="1">Cytoplasm</location>
    </subcellularLocation>
</comment>
<comment type="similarity">
    <text evidence="1">Belongs to the class I-like SAM-binding methyltransferase superfamily. rRNA adenine N(6)-methyltransferase family. RsmA subfamily.</text>
</comment>
<gene>
    <name evidence="1" type="primary">rsmA</name>
    <name evidence="1" type="synonym">ksgA</name>
    <name type="ordered locus">CHU_1628</name>
</gene>
<reference key="1">
    <citation type="journal article" date="2007" name="Appl. Environ. Microbiol.">
        <title>Genome sequence of the cellulolytic gliding bacterium Cytophaga hutchinsonii.</title>
        <authorList>
            <person name="Xie G."/>
            <person name="Bruce D.C."/>
            <person name="Challacombe J.F."/>
            <person name="Chertkov O."/>
            <person name="Detter J.C."/>
            <person name="Gilna P."/>
            <person name="Han C.S."/>
            <person name="Lucas S."/>
            <person name="Misra M."/>
            <person name="Myers G.L."/>
            <person name="Richardson P."/>
            <person name="Tapia R."/>
            <person name="Thayer N."/>
            <person name="Thompson L.S."/>
            <person name="Brettin T.S."/>
            <person name="Henrissat B."/>
            <person name="Wilson D.B."/>
            <person name="McBride M.J."/>
        </authorList>
    </citation>
    <scope>NUCLEOTIDE SEQUENCE [LARGE SCALE GENOMIC DNA]</scope>
    <source>
        <strain>ATCC 33406 / DSM 1761 / JCM 20678 / CIP 103989 / IAM 12607 / NBRC 15051 / NCIMB 9469 / D465</strain>
    </source>
</reference>
<dbReference type="EC" id="2.1.1.182" evidence="1"/>
<dbReference type="EMBL" id="CP000383">
    <property type="protein sequence ID" value="ABG58897.1"/>
    <property type="molecule type" value="Genomic_DNA"/>
</dbReference>
<dbReference type="RefSeq" id="WP_011585013.1">
    <property type="nucleotide sequence ID" value="NC_008255.1"/>
</dbReference>
<dbReference type="SMR" id="Q11UL8"/>
<dbReference type="STRING" id="269798.CHU_1628"/>
<dbReference type="KEGG" id="chu:CHU_1628"/>
<dbReference type="eggNOG" id="COG0030">
    <property type="taxonomic scope" value="Bacteria"/>
</dbReference>
<dbReference type="HOGENOM" id="CLU_041220_0_1_10"/>
<dbReference type="OrthoDB" id="9814755at2"/>
<dbReference type="Proteomes" id="UP000001822">
    <property type="component" value="Chromosome"/>
</dbReference>
<dbReference type="GO" id="GO:0005829">
    <property type="term" value="C:cytosol"/>
    <property type="evidence" value="ECO:0007669"/>
    <property type="project" value="TreeGrafter"/>
</dbReference>
<dbReference type="GO" id="GO:0052908">
    <property type="term" value="F:16S rRNA (adenine(1518)-N(6)/adenine(1519)-N(6))-dimethyltransferase activity"/>
    <property type="evidence" value="ECO:0007669"/>
    <property type="project" value="UniProtKB-EC"/>
</dbReference>
<dbReference type="GO" id="GO:0003723">
    <property type="term" value="F:RNA binding"/>
    <property type="evidence" value="ECO:0007669"/>
    <property type="project" value="UniProtKB-KW"/>
</dbReference>
<dbReference type="CDD" id="cd02440">
    <property type="entry name" value="AdoMet_MTases"/>
    <property type="match status" value="1"/>
</dbReference>
<dbReference type="Gene3D" id="1.10.8.100">
    <property type="entry name" value="Ribosomal RNA adenine dimethylase-like, domain 2"/>
    <property type="match status" value="1"/>
</dbReference>
<dbReference type="Gene3D" id="3.40.50.150">
    <property type="entry name" value="Vaccinia Virus protein VP39"/>
    <property type="match status" value="1"/>
</dbReference>
<dbReference type="HAMAP" id="MF_00607">
    <property type="entry name" value="16SrRNA_methyltr_A"/>
    <property type="match status" value="1"/>
</dbReference>
<dbReference type="InterPro" id="IPR001737">
    <property type="entry name" value="KsgA/Erm"/>
</dbReference>
<dbReference type="InterPro" id="IPR023165">
    <property type="entry name" value="rRNA_Ade_diMease-like_C"/>
</dbReference>
<dbReference type="InterPro" id="IPR020598">
    <property type="entry name" value="rRNA_Ade_methylase_Trfase_N"/>
</dbReference>
<dbReference type="InterPro" id="IPR011530">
    <property type="entry name" value="rRNA_adenine_dimethylase"/>
</dbReference>
<dbReference type="InterPro" id="IPR029063">
    <property type="entry name" value="SAM-dependent_MTases_sf"/>
</dbReference>
<dbReference type="NCBIfam" id="TIGR00755">
    <property type="entry name" value="ksgA"/>
    <property type="match status" value="1"/>
</dbReference>
<dbReference type="PANTHER" id="PTHR11727">
    <property type="entry name" value="DIMETHYLADENOSINE TRANSFERASE"/>
    <property type="match status" value="1"/>
</dbReference>
<dbReference type="PANTHER" id="PTHR11727:SF7">
    <property type="entry name" value="DIMETHYLADENOSINE TRANSFERASE-RELATED"/>
    <property type="match status" value="1"/>
</dbReference>
<dbReference type="Pfam" id="PF00398">
    <property type="entry name" value="RrnaAD"/>
    <property type="match status" value="1"/>
</dbReference>
<dbReference type="SMART" id="SM00650">
    <property type="entry name" value="rADc"/>
    <property type="match status" value="1"/>
</dbReference>
<dbReference type="SUPFAM" id="SSF53335">
    <property type="entry name" value="S-adenosyl-L-methionine-dependent methyltransferases"/>
    <property type="match status" value="1"/>
</dbReference>
<dbReference type="PROSITE" id="PS51689">
    <property type="entry name" value="SAM_RNA_A_N6_MT"/>
    <property type="match status" value="1"/>
</dbReference>
<name>RSMA_CYTH3</name>
<organism>
    <name type="scientific">Cytophaga hutchinsonii (strain ATCC 33406 / DSM 1761 / CIP 103989 / NBRC 15051 / NCIMB 9469 / D465)</name>
    <dbReference type="NCBI Taxonomy" id="269798"/>
    <lineage>
        <taxon>Bacteria</taxon>
        <taxon>Pseudomonadati</taxon>
        <taxon>Bacteroidota</taxon>
        <taxon>Cytophagia</taxon>
        <taxon>Cytophagales</taxon>
        <taxon>Cytophagaceae</taxon>
        <taxon>Cytophaga</taxon>
    </lineage>
</organism>
<accession>Q11UL8</accession>
<proteinExistence type="inferred from homology"/>
<feature type="chain" id="PRO_0000257279" description="Ribosomal RNA small subunit methyltransferase A">
    <location>
        <begin position="1"/>
        <end position="258"/>
    </location>
</feature>
<feature type="binding site" evidence="1">
    <location>
        <position position="13"/>
    </location>
    <ligand>
        <name>S-adenosyl-L-methionine</name>
        <dbReference type="ChEBI" id="CHEBI:59789"/>
    </ligand>
</feature>
<feature type="binding site" evidence="1">
    <location>
        <position position="15"/>
    </location>
    <ligand>
        <name>S-adenosyl-L-methionine</name>
        <dbReference type="ChEBI" id="CHEBI:59789"/>
    </ligand>
</feature>
<feature type="binding site" evidence="1">
    <location>
        <position position="41"/>
    </location>
    <ligand>
        <name>S-adenosyl-L-methionine</name>
        <dbReference type="ChEBI" id="CHEBI:59789"/>
    </ligand>
</feature>
<feature type="binding site" evidence="1">
    <location>
        <position position="63"/>
    </location>
    <ligand>
        <name>S-adenosyl-L-methionine</name>
        <dbReference type="ChEBI" id="CHEBI:59789"/>
    </ligand>
</feature>
<feature type="binding site" evidence="1">
    <location>
        <position position="87"/>
    </location>
    <ligand>
        <name>S-adenosyl-L-methionine</name>
        <dbReference type="ChEBI" id="CHEBI:59789"/>
    </ligand>
</feature>
<feature type="binding site" evidence="1">
    <location>
        <position position="106"/>
    </location>
    <ligand>
        <name>S-adenosyl-L-methionine</name>
        <dbReference type="ChEBI" id="CHEBI:59789"/>
    </ligand>
</feature>
<sequence>MEKVKAKKHLGQHFLNDQQIAQDIVDGLTLHGSYKEVLEIGPGMGVLTQYLLKNNSYHTKVVDIDGESIEYLKKVFPQLKDDVIHGDFLKADLADWYPDKFAIIGNFPYNISTEILFKVLDYREQIPEVVGMFQKEVAERFAAKNGNKTYGITSVLLQAFYDIEYLFTVPEHVFTPPPKVKSGVIRLKRNNRTHLPCDEKEFFKVVKAGFNMRRKTLRNALKSINVQNISMDLPIFDKRAEQLSVQEFFDLTNMLSGK</sequence>
<evidence type="ECO:0000255" key="1">
    <source>
        <dbReference type="HAMAP-Rule" id="MF_00607"/>
    </source>
</evidence>
<protein>
    <recommendedName>
        <fullName evidence="1">Ribosomal RNA small subunit methyltransferase A</fullName>
        <ecNumber evidence="1">2.1.1.182</ecNumber>
    </recommendedName>
    <alternativeName>
        <fullName evidence="1">16S rRNA (adenine(1518)-N(6)/adenine(1519)-N(6))-dimethyltransferase</fullName>
    </alternativeName>
    <alternativeName>
        <fullName evidence="1">16S rRNA dimethyladenosine transferase</fullName>
    </alternativeName>
    <alternativeName>
        <fullName evidence="1">16S rRNA dimethylase</fullName>
    </alternativeName>
    <alternativeName>
        <fullName evidence="1">S-adenosylmethionine-6-N', N'-adenosyl(rRNA) dimethyltransferase</fullName>
    </alternativeName>
</protein>
<keyword id="KW-0963">Cytoplasm</keyword>
<keyword id="KW-0489">Methyltransferase</keyword>
<keyword id="KW-1185">Reference proteome</keyword>
<keyword id="KW-0694">RNA-binding</keyword>
<keyword id="KW-0698">rRNA processing</keyword>
<keyword id="KW-0949">S-adenosyl-L-methionine</keyword>
<keyword id="KW-0808">Transferase</keyword>